<gene>
    <name evidence="19 23" type="primary">FUT9</name>
</gene>
<feature type="chain" id="PRO_0000221118" description="4-galactosyl-N-acetylglucosaminide 3-alpha-L-fucosyltransferase 9">
    <location>
        <begin position="1"/>
        <end position="359"/>
    </location>
</feature>
<feature type="topological domain" description="Cytoplasmic" evidence="3">
    <location>
        <begin position="1"/>
        <end position="11"/>
    </location>
</feature>
<feature type="transmembrane region" description="Helical; Signal-anchor for type II membrane protein" evidence="3">
    <location>
        <begin position="12"/>
        <end position="32"/>
    </location>
</feature>
<feature type="topological domain" description="Lumenal" evidence="3">
    <location>
        <begin position="33"/>
        <end position="359"/>
    </location>
</feature>
<feature type="region of interest" description="Acceptor-binding" evidence="17">
    <location>
        <begin position="63"/>
        <end position="168"/>
    </location>
</feature>
<feature type="region of interest" description="Donor-binding" evidence="17">
    <location>
        <begin position="169"/>
        <end position="326"/>
    </location>
</feature>
<feature type="region of interest" description="Acceptor-binding" evidence="17">
    <location>
        <begin position="327"/>
        <end position="359"/>
    </location>
</feature>
<feature type="active site" description="Nucleophile" evidence="17">
    <location>
        <position position="137"/>
    </location>
</feature>
<feature type="binding site" evidence="17 25 26">
    <location>
        <position position="75"/>
    </location>
    <ligand>
        <name>a beta-D-galactosyl-(1-&gt;4)-N-acetyl-beta-D-glucosaminyl derivative</name>
        <dbReference type="ChEBI" id="CHEBI:133507"/>
    </ligand>
</feature>
<feature type="binding site" evidence="17 25 26">
    <location>
        <position position="137"/>
    </location>
    <ligand>
        <name>a beta-D-galactosyl-(1-&gt;4)-N-acetyl-beta-D-glucosaminyl derivative</name>
        <dbReference type="ChEBI" id="CHEBI:133507"/>
    </ligand>
</feature>
<feature type="binding site" evidence="17 25">
    <location>
        <position position="137"/>
    </location>
    <ligand>
        <name>GDP-beta-L-fucose</name>
        <dbReference type="ChEBI" id="CHEBI:57273"/>
    </ligand>
</feature>
<feature type="binding site" evidence="17 25">
    <location>
        <position position="168"/>
    </location>
    <ligand>
        <name>GDP-beta-L-fucose</name>
        <dbReference type="ChEBI" id="CHEBI:57273"/>
    </ligand>
</feature>
<feature type="binding site" evidence="17 25">
    <location>
        <position position="192"/>
    </location>
    <ligand>
        <name>GDP-beta-L-fucose</name>
        <dbReference type="ChEBI" id="CHEBI:57273"/>
    </ligand>
</feature>
<feature type="binding site" evidence="17 25">
    <location>
        <position position="194"/>
    </location>
    <ligand>
        <name>GDP-beta-L-fucose</name>
        <dbReference type="ChEBI" id="CHEBI:57273"/>
    </ligand>
</feature>
<feature type="binding site" evidence="17 25">
    <location>
        <position position="195"/>
    </location>
    <ligand>
        <name>GDP-beta-L-fucose</name>
        <dbReference type="ChEBI" id="CHEBI:57273"/>
    </ligand>
</feature>
<feature type="binding site" evidence="17 25">
    <location>
        <position position="202"/>
    </location>
    <ligand>
        <name>GDP-beta-L-fucose</name>
        <dbReference type="ChEBI" id="CHEBI:57273"/>
    </ligand>
</feature>
<feature type="binding site" evidence="17 25">
    <location>
        <position position="226"/>
    </location>
    <ligand>
        <name>GDP-beta-L-fucose</name>
        <dbReference type="ChEBI" id="CHEBI:57273"/>
    </ligand>
</feature>
<feature type="binding site" evidence="17 25">
    <location>
        <position position="241"/>
    </location>
    <ligand>
        <name>GDP-beta-L-fucose</name>
        <dbReference type="ChEBI" id="CHEBI:57273"/>
    </ligand>
</feature>
<feature type="binding site" evidence="17 25">
    <location>
        <position position="246"/>
    </location>
    <ligand>
        <name>GDP-beta-L-fucose</name>
        <dbReference type="ChEBI" id="CHEBI:57273"/>
    </ligand>
</feature>
<feature type="binding site" evidence="17 25">
    <location>
        <position position="252"/>
    </location>
    <ligand>
        <name>GDP-beta-L-fucose</name>
        <dbReference type="ChEBI" id="CHEBI:57273"/>
    </ligand>
</feature>
<feature type="binding site" evidence="17 25">
    <location>
        <position position="255"/>
    </location>
    <ligand>
        <name>GDP-beta-L-fucose</name>
        <dbReference type="ChEBI" id="CHEBI:57273"/>
    </ligand>
</feature>
<feature type="binding site" evidence="17 25">
    <location>
        <position position="256"/>
    </location>
    <ligand>
        <name>GDP-beta-L-fucose</name>
        <dbReference type="ChEBI" id="CHEBI:57273"/>
    </ligand>
</feature>
<feature type="glycosylation site" description="N-linked (GlcNAc...) asparagine" evidence="3">
    <location>
        <position position="62"/>
    </location>
</feature>
<feature type="glycosylation site" description="N-linked (GlcNAc...) asparagine" evidence="3">
    <location>
        <position position="101"/>
    </location>
</feature>
<feature type="glycosylation site" description="N-linked (GlcNAc...) asparagine" evidence="3 17 24">
    <location>
        <position position="153"/>
    </location>
</feature>
<feature type="disulfide bond" evidence="17 25">
    <location>
        <begin position="82"/>
        <end position="335"/>
    </location>
</feature>
<feature type="disulfide bond" evidence="17 25">
    <location>
        <begin position="91"/>
        <end position="338"/>
    </location>
</feature>
<feature type="disulfide bond" evidence="17 25">
    <location>
        <begin position="190"/>
        <end position="238"/>
    </location>
</feature>
<feature type="sequence variant" id="VAR_024465" description="In dbSNP:rs3811069." evidence="4 6 9">
    <original>T</original>
    <variation>A</variation>
    <location>
        <position position="237"/>
    </location>
</feature>
<feature type="sequence variant" id="VAR_030575" description="In dbSNP:rs9986564.">
    <original>W</original>
    <variation>G</variation>
    <location>
        <position position="358"/>
    </location>
</feature>
<feature type="mutagenesis site" description="Does not affect glycosylation. Does not affect 4-galactosyl-N-acetylglucosaminide 3-alpha-L-fucosyltransferase activity. Affects subcellular location." evidence="12">
    <location>
        <begin position="2"/>
        <end position="9"/>
    </location>
</feature>
<feature type="mutagenesis site" description="Does not affect glycosylation. Does not affect 4-galactosyl-N-acetylglucosaminide 3-alpha-L-fucosyltransferase activity. Affects subcellular location." evidence="12">
    <location>
        <begin position="2"/>
        <end position="5"/>
    </location>
</feature>
<feature type="mutagenesis site" description="Does not affect glycosylation; when associated with A-5. Does not affect 4-galactosyl-N-acetylglucosaminide 3-alpha-L-fucosyltransferase activity; when associated with A-5. Does not affect subcellular location; when associated with A-5." evidence="12">
    <original>S</original>
    <variation>A</variation>
    <location>
        <position position="3"/>
    </location>
</feature>
<feature type="mutagenesis site" description="Does not affect glycosylation; when associated with A-3. Does not affect 4-galactosyl-N-acetylglucosaminide 3-alpha-L-fucosyltransferase activity; when associated with A-3. Does not affect subcellular location; when associated with A-3." evidence="12">
    <original>S</original>
    <variation>A</variation>
    <location>
        <position position="5"/>
    </location>
</feature>
<feature type="mutagenesis site" description="Weakly decreases alpha 1,3-fucosyltransferase activity. Almost complete loss of alpha 1,3-fucosyltransferase activity; when associated with Q-101. Almost complete loss of alpha 1,3-fucosyltransferase activity; when associated with Q-153. Loss of catalytic efficiency." evidence="15">
    <original>N</original>
    <variation>Q</variation>
    <location>
        <position position="62"/>
    </location>
</feature>
<feature type="mutagenesis site" description="Complete loss of alpha 1,3-fucosyltransferase activity toward LNnT and H-type 2 LacNAc." evidence="17">
    <original>F</original>
    <variation>A</variation>
    <location>
        <position position="73"/>
    </location>
</feature>
<feature type="mutagenesis site" description="Decreases catalytic efficiency toward LNnT, H-type 2 LacNAc and type 2 LacNAc by 35-fold, 68-fold and 69-fold, respectively." evidence="17">
    <original>Q</original>
    <variation>A</variation>
    <location>
        <position position="75"/>
    </location>
</feature>
<feature type="mutagenesis site" description="Significantly decreases alpha 1,3-fucosyltransferase activity. Almost complete loss of alpha 1,3-fucosyltransferase activity; when associated with Q-62. Almost complete loss of alpha 1,3-fucosyltransferase activity; when associated with Q-153. Loss of catalytic efficiency." evidence="15">
    <original>N</original>
    <variation>Q</variation>
    <location>
        <position position="101"/>
    </location>
</feature>
<feature type="mutagenesis site" description="Decreases catalytic efficiency toward LNnT and H-type 2 LacNAc by 10-fold and 27-fold, respectively." evidence="17">
    <original>R</original>
    <variation>A</variation>
    <location>
        <position position="111"/>
    </location>
</feature>
<feature type="mutagenesis site" description="Decreases catalytic efficiency toward LNnT and H-type 2 LacNAc by 93-fold and 89-fold, respectively." evidence="17">
    <original>R</original>
    <variation>W</variation>
    <location>
        <position position="111"/>
    </location>
</feature>
<feature type="mutagenesis site" description="Decreases catalytic efficiency toward GDP-beta-L-fucose, LNnT and H-type 2 LacNAc by 1180-fold, 2400-fold and 2870-fold, respectively." evidence="17">
    <original>E</original>
    <variation>A</variation>
    <location>
        <position position="137"/>
    </location>
</feature>
<feature type="mutagenesis site" description="Complete loss of alpha 1,3-fucosyltransferase activity toward LNnT and H-type 2 LacNAc." evidence="17">
    <original>E</original>
    <variation>Q</variation>
    <location>
        <position position="137"/>
    </location>
</feature>
<feature type="mutagenesis site" description="Decreases catalytic efficiency toward LNnT and H-type 2 LacNAc by 57-fold and 97-fold, respectively." evidence="17">
    <original>H</original>
    <variation>A</variation>
    <location>
        <position position="141"/>
    </location>
</feature>
<feature type="mutagenesis site" description="Decreases catalytic efficiency toward LNnT and H-type 2 LacNAc by 5-fold and 8-fold, respectively." evidence="17">
    <original>H</original>
    <variation>N</variation>
    <location>
        <position position="141"/>
    </location>
</feature>
<feature type="mutagenesis site" description="Almost complete loss of alpha 1,3-fucosyltransferase activity. Almost complete loss of alpha 1,3-fucosyltransferase activity; when associated with Q-62. Almost complete loss of alpha 1,3-fucosyltransferase activity; when associated with Q-101." evidence="15">
    <original>N</original>
    <variation>Q</variation>
    <location>
        <position position="153"/>
    </location>
</feature>
<feature type="mutagenesis site" description="Decreases catalytic efficiency toward GDP-beta-L-fucose, LNnT and H-type 2 LacNAc by 2180-fold, 296-fold and 458-fold, respectively." evidence="17">
    <original>S</original>
    <variation>A</variation>
    <location>
        <position position="194"/>
    </location>
</feature>
<feature type="mutagenesis site" description="Decreases catalytic efficiency toward GDP-beta-L-fucose, LNnT and H-type 2 LacNAc by 82-fold, 52-fold and 123-fold, respectively." evidence="17">
    <original>N</original>
    <variation>A</variation>
    <location>
        <position position="195"/>
    </location>
</feature>
<feature type="mutagenesis site" description="Decreases catalytic efficiency toward GDP-beta-L-fucose, LNnT and H-type 2 LacNAc by 179-fold, 18-fold and 47-fold, respectively." evidence="17">
    <original>N</original>
    <variation>A</variation>
    <location>
        <position position="197"/>
    </location>
</feature>
<feature type="mutagenesis site" description="Decreases catalytic efficiency toward H-type 2 LacNAc by 2-fold. Decreases catalytic efficiency toward GDP-beta-L-fucose by 4-fold. Does not affect the catalytic efficiency toward LNnT." evidence="17">
    <original>H</original>
    <variation>A</variation>
    <location>
        <position position="200"/>
    </location>
</feature>
<feature type="mutagenesis site" description="Complete loss of alpha 1,3-fucosyltransferase activity toward LNnT and H-type 2 LacNAc." evidence="17">
    <original>R</original>
    <variation>A</variation>
    <variation>K</variation>
    <location>
        <position position="202"/>
    </location>
</feature>
<feature type="mutagenesis site" description="Decreases catalytic efficiency toward GDP-beta-L-fucose, LNnT and H-type 2 LacNAc by 39-fold, 9-fold and 25-fold, respectively." evidence="17">
    <original>D</original>
    <variation>A</variation>
    <location>
        <position position="228"/>
    </location>
</feature>
<feature type="mutagenesis site" description="Decreases catalytic efficiency toward GDP-beta-L-fucose, LNnT and H-type 2 LacNAc by 19-fold, 3-fold and 19-fold, respectively." evidence="17">
    <original>D</original>
    <variation>K</variation>
    <location>
        <position position="228"/>
    </location>
</feature>
<feature type="mutagenesis site" description="Decreases expression." evidence="17">
    <original>Y</original>
    <variation>A</variation>
    <location>
        <position position="241"/>
    </location>
</feature>
<feature type="mutagenesis site" description="Decreases catalytic efficiency toward GDP-beta-L-fucose, LNnT and H-type 2 LacNAc by 70-fold, 30-fold and 109-fold, respectively." evidence="17">
    <original>N</original>
    <variation>A</variation>
    <location>
        <position position="246"/>
    </location>
</feature>
<feature type="mutagenesis site" description="Decreases expression." evidence="17">
    <original>Y</original>
    <variation>A</variation>
    <location>
        <position position="252"/>
    </location>
</feature>
<feature type="mutagenesis site" description="Decreases catalytic efficiency toward LNnT and H-type 2 LacNAc by 270-fold and 394-fold, respectively." evidence="17">
    <original>T</original>
    <variation>A</variation>
    <location>
        <position position="254"/>
    </location>
</feature>
<feature type="mutagenesis site" description="Decreases catalytic efficiency toward GDP-beta-L-fucose, LNnT and H-type 2 LacNAc by 288-fold, 112-fold and 367-fold, respectively." evidence="17">
    <original>E</original>
    <variation>A</variation>
    <location>
        <position position="255"/>
    </location>
</feature>
<feature type="mutagenesis site" description="Complete loss of alpha 1,3-fucosyltransferase activity toward LNnT and H-type 2 LacNAc." evidence="17">
    <original>K</original>
    <variation>A</variation>
    <location>
        <position position="256"/>
    </location>
</feature>
<feature type="mutagenesis site" description="Decreases catalytic efficiency toward type 2 LacNAc, LNnT and H-type 2 LacNAc by 3320-fold, 1280-fold and 3060-fold, respectively; when associated with S-328 and F-329 del." evidence="17">
    <original>P</original>
    <variation>F</variation>
    <location>
        <position position="327"/>
    </location>
</feature>
<feature type="mutagenesis site" description="Decreases catalytic efficiency toward type 2 LacNAc, LNnT and H-type 2 LacNAc by 3320-fold, 1280-fold and 3060-fold, respectively; when associated with F-327 and F-329 del." evidence="17">
    <original>R</original>
    <variation>S</variation>
    <location>
        <position position="328"/>
    </location>
</feature>
<feature type="mutagenesis site" description="Decreases catalytic efficiency toward type 2 LacNAc, LNnT and H-type 2 LacNAc by 369-fold, 90-fold and 421-fold, respectively." evidence="17">
    <original>F</original>
    <variation>A</variation>
    <location>
        <position position="329"/>
    </location>
</feature>
<feature type="mutagenesis site" description="Decreases catalytic efficiency toward type 2 LacNAc, LNnT and H-type 2 LacNAc by 3320-fold, 1280-fold and 3060-fold, respectively; when associated with F-327 and S-328." evidence="17">
    <location>
        <position position="329"/>
    </location>
</feature>
<feature type="strand" evidence="27">
    <location>
        <begin position="64"/>
        <end position="68"/>
    </location>
</feature>
<feature type="helix" evidence="27">
    <location>
        <begin position="72"/>
        <end position="74"/>
    </location>
</feature>
<feature type="helix" evidence="27">
    <location>
        <begin position="82"/>
        <end position="86"/>
    </location>
</feature>
<feature type="strand" evidence="27">
    <location>
        <begin position="90"/>
        <end position="94"/>
    </location>
</feature>
<feature type="helix" evidence="27">
    <location>
        <begin position="97"/>
        <end position="102"/>
    </location>
</feature>
<feature type="strand" evidence="27">
    <location>
        <begin position="104"/>
        <end position="109"/>
    </location>
</feature>
<feature type="helix" evidence="27">
    <location>
        <begin position="110"/>
        <end position="112"/>
    </location>
</feature>
<feature type="strand" evidence="27">
    <location>
        <begin position="130"/>
        <end position="134"/>
    </location>
</feature>
<feature type="helix" evidence="27">
    <location>
        <begin position="139"/>
        <end position="141"/>
    </location>
</feature>
<feature type="strand" evidence="27">
    <location>
        <begin position="153"/>
        <end position="159"/>
    </location>
</feature>
<feature type="strand" evidence="27">
    <location>
        <begin position="162"/>
        <end position="165"/>
    </location>
</feature>
<feature type="strand" evidence="27">
    <location>
        <begin position="170"/>
        <end position="173"/>
    </location>
</feature>
<feature type="strand" evidence="27">
    <location>
        <begin position="187"/>
        <end position="192"/>
    </location>
</feature>
<feature type="helix" evidence="27">
    <location>
        <begin position="201"/>
        <end position="209"/>
    </location>
</feature>
<feature type="turn" evidence="27">
    <location>
        <begin position="210"/>
        <end position="212"/>
    </location>
</feature>
<feature type="strand" evidence="27">
    <location>
        <begin position="216"/>
        <end position="219"/>
    </location>
</feature>
<feature type="helix" evidence="27">
    <location>
        <begin position="220"/>
        <end position="222"/>
    </location>
</feature>
<feature type="helix" evidence="27">
    <location>
        <begin position="228"/>
        <end position="236"/>
    </location>
</feature>
<feature type="strand" evidence="27">
    <location>
        <begin position="238"/>
        <end position="244"/>
    </location>
</feature>
<feature type="helix" evidence="27">
    <location>
        <begin position="255"/>
        <end position="263"/>
    </location>
</feature>
<feature type="strand" evidence="27">
    <location>
        <begin position="266"/>
        <end position="272"/>
    </location>
</feature>
<feature type="helix" evidence="27">
    <location>
        <begin position="274"/>
        <end position="277"/>
    </location>
</feature>
<feature type="turn" evidence="27">
    <location>
        <begin position="278"/>
        <end position="280"/>
    </location>
</feature>
<feature type="helix" evidence="27">
    <location>
        <begin position="283"/>
        <end position="285"/>
    </location>
</feature>
<feature type="helix" evidence="27">
    <location>
        <begin position="289"/>
        <end position="291"/>
    </location>
</feature>
<feature type="strand" evidence="27">
    <location>
        <begin position="292"/>
        <end position="294"/>
    </location>
</feature>
<feature type="helix" evidence="27">
    <location>
        <begin position="295"/>
        <end position="306"/>
    </location>
</feature>
<feature type="helix" evidence="27">
    <location>
        <begin position="309"/>
        <end position="314"/>
    </location>
</feature>
<feature type="helix" evidence="27">
    <location>
        <begin position="315"/>
        <end position="320"/>
    </location>
</feature>
<feature type="strand" evidence="27">
    <location>
        <begin position="322"/>
        <end position="325"/>
    </location>
</feature>
<feature type="helix" evidence="27">
    <location>
        <begin position="331"/>
        <end position="343"/>
    </location>
</feature>
<feature type="helix" evidence="27">
    <location>
        <begin position="353"/>
        <end position="357"/>
    </location>
</feature>
<organism>
    <name type="scientific">Homo sapiens</name>
    <name type="common">Human</name>
    <dbReference type="NCBI Taxonomy" id="9606"/>
    <lineage>
        <taxon>Eukaryota</taxon>
        <taxon>Metazoa</taxon>
        <taxon>Chordata</taxon>
        <taxon>Craniata</taxon>
        <taxon>Vertebrata</taxon>
        <taxon>Euteleostomi</taxon>
        <taxon>Mammalia</taxon>
        <taxon>Eutheria</taxon>
        <taxon>Euarchontoglires</taxon>
        <taxon>Primates</taxon>
        <taxon>Haplorrhini</taxon>
        <taxon>Catarrhini</taxon>
        <taxon>Hominidae</taxon>
        <taxon>Homo</taxon>
    </lineage>
</organism>
<evidence type="ECO:0000250" key="1">
    <source>
        <dbReference type="UniProtKB" id="O88819"/>
    </source>
</evidence>
<evidence type="ECO:0000250" key="2">
    <source>
        <dbReference type="UniProtKB" id="Q6P4F1"/>
    </source>
</evidence>
<evidence type="ECO:0000255" key="3"/>
<evidence type="ECO:0000269" key="4">
    <source>
    </source>
</evidence>
<evidence type="ECO:0000269" key="5">
    <source>
    </source>
</evidence>
<evidence type="ECO:0000269" key="6">
    <source>
    </source>
</evidence>
<evidence type="ECO:0000269" key="7">
    <source>
    </source>
</evidence>
<evidence type="ECO:0000269" key="8">
    <source>
    </source>
</evidence>
<evidence type="ECO:0000269" key="9">
    <source>
    </source>
</evidence>
<evidence type="ECO:0000269" key="10">
    <source>
    </source>
</evidence>
<evidence type="ECO:0000269" key="11">
    <source>
    </source>
</evidence>
<evidence type="ECO:0000269" key="12">
    <source>
    </source>
</evidence>
<evidence type="ECO:0000269" key="13">
    <source>
    </source>
</evidence>
<evidence type="ECO:0000269" key="14">
    <source>
    </source>
</evidence>
<evidence type="ECO:0000269" key="15">
    <source>
    </source>
</evidence>
<evidence type="ECO:0000269" key="16">
    <source>
    </source>
</evidence>
<evidence type="ECO:0000269" key="17">
    <source>
    </source>
</evidence>
<evidence type="ECO:0000303" key="18">
    <source>
    </source>
</evidence>
<evidence type="ECO:0000303" key="19">
    <source>
    </source>
</evidence>
<evidence type="ECO:0000303" key="20">
    <source>
    </source>
</evidence>
<evidence type="ECO:0000305" key="21"/>
<evidence type="ECO:0000305" key="22">
    <source>
    </source>
</evidence>
<evidence type="ECO:0000312" key="23">
    <source>
        <dbReference type="HGNC" id="HGNC:4020"/>
    </source>
</evidence>
<evidence type="ECO:0007744" key="24">
    <source>
        <dbReference type="PDB" id="8D0O"/>
    </source>
</evidence>
<evidence type="ECO:0007744" key="25">
    <source>
        <dbReference type="PDB" id="8D0Q"/>
    </source>
</evidence>
<evidence type="ECO:0007744" key="26">
    <source>
        <dbReference type="PDB" id="8D0S"/>
    </source>
</evidence>
<evidence type="ECO:0007829" key="27">
    <source>
        <dbReference type="PDB" id="8D0P"/>
    </source>
</evidence>
<dbReference type="EC" id="2.4.1.152" evidence="5 7 8 12 14 15 17"/>
<dbReference type="EMBL" id="AB023021">
    <property type="protein sequence ID" value="BAA81685.1"/>
    <property type="molecule type" value="mRNA"/>
</dbReference>
<dbReference type="EMBL" id="AJ238701">
    <property type="protein sequence ID" value="CAB41890.1"/>
    <property type="molecule type" value="mRNA"/>
</dbReference>
<dbReference type="EMBL" id="AL512406">
    <property type="status" value="NOT_ANNOTATED_CDS"/>
    <property type="molecule type" value="Genomic_DNA"/>
</dbReference>
<dbReference type="EMBL" id="BC036101">
    <property type="protein sequence ID" value="AAH36101.1"/>
    <property type="molecule type" value="mRNA"/>
</dbReference>
<dbReference type="CCDS" id="CCDS5033.1"/>
<dbReference type="RefSeq" id="NP_006572.2">
    <property type="nucleotide sequence ID" value="NM_006581.4"/>
</dbReference>
<dbReference type="RefSeq" id="XP_011533685.1">
    <property type="nucleotide sequence ID" value="XM_011535383.2"/>
</dbReference>
<dbReference type="RefSeq" id="XP_011533687.1">
    <property type="nucleotide sequence ID" value="XM_011535385.3"/>
</dbReference>
<dbReference type="RefSeq" id="XP_016865677.1">
    <property type="nucleotide sequence ID" value="XM_017010188.2"/>
</dbReference>
<dbReference type="RefSeq" id="XP_016865679.1">
    <property type="nucleotide sequence ID" value="XM_017010190.2"/>
</dbReference>
<dbReference type="RefSeq" id="XP_047274044.1">
    <property type="nucleotide sequence ID" value="XM_047418088.1"/>
</dbReference>
<dbReference type="RefSeq" id="XP_047274045.1">
    <property type="nucleotide sequence ID" value="XM_047418089.1"/>
</dbReference>
<dbReference type="PDB" id="8D0O">
    <property type="method" value="X-ray"/>
    <property type="resolution" value="2.10 A"/>
    <property type="chains" value="A=39-359"/>
</dbReference>
<dbReference type="PDB" id="8D0P">
    <property type="method" value="X-ray"/>
    <property type="resolution" value="1.09 A"/>
    <property type="chains" value="A=39-359"/>
</dbReference>
<dbReference type="PDB" id="8D0Q">
    <property type="method" value="X-ray"/>
    <property type="resolution" value="1.39 A"/>
    <property type="chains" value="A=39-359"/>
</dbReference>
<dbReference type="PDB" id="8D0R">
    <property type="method" value="X-ray"/>
    <property type="resolution" value="1.40 A"/>
    <property type="chains" value="A=39-359"/>
</dbReference>
<dbReference type="PDB" id="8D0S">
    <property type="method" value="X-ray"/>
    <property type="resolution" value="1.37 A"/>
    <property type="chains" value="A=39-359"/>
</dbReference>
<dbReference type="PDB" id="8D0U">
    <property type="method" value="X-ray"/>
    <property type="resolution" value="1.29 A"/>
    <property type="chains" value="A=39-359"/>
</dbReference>
<dbReference type="PDB" id="8D0W">
    <property type="method" value="X-ray"/>
    <property type="resolution" value="1.33 A"/>
    <property type="chains" value="A=39-359"/>
</dbReference>
<dbReference type="PDB" id="8D0X">
    <property type="method" value="X-ray"/>
    <property type="resolution" value="1.33 A"/>
    <property type="chains" value="A=39-359"/>
</dbReference>
<dbReference type="PDBsum" id="8D0O"/>
<dbReference type="PDBsum" id="8D0P"/>
<dbReference type="PDBsum" id="8D0Q"/>
<dbReference type="PDBsum" id="8D0R"/>
<dbReference type="PDBsum" id="8D0S"/>
<dbReference type="PDBsum" id="8D0U"/>
<dbReference type="PDBsum" id="8D0W"/>
<dbReference type="PDBsum" id="8D0X"/>
<dbReference type="SMR" id="Q9Y231"/>
<dbReference type="BioGRID" id="115929">
    <property type="interactions" value="16"/>
</dbReference>
<dbReference type="FunCoup" id="Q9Y231">
    <property type="interactions" value="606"/>
</dbReference>
<dbReference type="IntAct" id="Q9Y231">
    <property type="interactions" value="8"/>
</dbReference>
<dbReference type="STRING" id="9606.ENSP00000302599"/>
<dbReference type="BindingDB" id="Q9Y231"/>
<dbReference type="ChEMBL" id="CHEMBL4985"/>
<dbReference type="CAZy" id="GT10">
    <property type="family name" value="Glycosyltransferase Family 10"/>
</dbReference>
<dbReference type="GlyCosmos" id="Q9Y231">
    <property type="glycosylation" value="3 sites, No reported glycans"/>
</dbReference>
<dbReference type="GlyGen" id="Q9Y231">
    <property type="glycosylation" value="3 sites"/>
</dbReference>
<dbReference type="iPTMnet" id="Q9Y231"/>
<dbReference type="PhosphoSitePlus" id="Q9Y231"/>
<dbReference type="BioMuta" id="FUT9"/>
<dbReference type="DMDM" id="311033382"/>
<dbReference type="MassIVE" id="Q9Y231"/>
<dbReference type="PaxDb" id="9606-ENSP00000302599"/>
<dbReference type="PeptideAtlas" id="Q9Y231"/>
<dbReference type="ProteomicsDB" id="85620"/>
<dbReference type="Antibodypedia" id="55123">
    <property type="antibodies" value="25 antibodies from 14 providers"/>
</dbReference>
<dbReference type="DNASU" id="10690"/>
<dbReference type="Ensembl" id="ENST00000302103.6">
    <property type="protein sequence ID" value="ENSP00000302599.4"/>
    <property type="gene ID" value="ENSG00000172461.11"/>
</dbReference>
<dbReference type="GeneID" id="10690"/>
<dbReference type="KEGG" id="hsa:10690"/>
<dbReference type="MANE-Select" id="ENST00000302103.6">
    <property type="protein sequence ID" value="ENSP00000302599.4"/>
    <property type="RefSeq nucleotide sequence ID" value="NM_006581.4"/>
    <property type="RefSeq protein sequence ID" value="NP_006572.2"/>
</dbReference>
<dbReference type="UCSC" id="uc003pop.5">
    <property type="organism name" value="human"/>
</dbReference>
<dbReference type="AGR" id="HGNC:4020"/>
<dbReference type="CTD" id="10690"/>
<dbReference type="DisGeNET" id="10690"/>
<dbReference type="GeneCards" id="FUT9"/>
<dbReference type="HGNC" id="HGNC:4020">
    <property type="gene designation" value="FUT9"/>
</dbReference>
<dbReference type="HPA" id="ENSG00000172461">
    <property type="expression patterns" value="Group enriched (brain, stomach)"/>
</dbReference>
<dbReference type="MIM" id="606865">
    <property type="type" value="gene"/>
</dbReference>
<dbReference type="neXtProt" id="NX_Q9Y231"/>
<dbReference type="OpenTargets" id="ENSG00000172461"/>
<dbReference type="PharmGKB" id="PA28436"/>
<dbReference type="VEuPathDB" id="HostDB:ENSG00000172461"/>
<dbReference type="eggNOG" id="KOG2619">
    <property type="taxonomic scope" value="Eukaryota"/>
</dbReference>
<dbReference type="GeneTree" id="ENSGT00940000155095"/>
<dbReference type="HOGENOM" id="CLU_032075_4_2_1"/>
<dbReference type="InParanoid" id="Q9Y231"/>
<dbReference type="OMA" id="FRKWDSQ"/>
<dbReference type="OrthoDB" id="427096at2759"/>
<dbReference type="PAN-GO" id="Q9Y231">
    <property type="GO annotations" value="2 GO annotations based on evolutionary models"/>
</dbReference>
<dbReference type="PhylomeDB" id="Q9Y231"/>
<dbReference type="TreeFam" id="TF316348"/>
<dbReference type="BioCyc" id="MetaCyc:HS10520-MONOMER"/>
<dbReference type="BRENDA" id="2.4.1.152">
    <property type="organism ID" value="2681"/>
</dbReference>
<dbReference type="PathwayCommons" id="Q9Y231"/>
<dbReference type="Reactome" id="R-HSA-9037629">
    <property type="pathway name" value="Lewis blood group biosynthesis"/>
</dbReference>
<dbReference type="SignaLink" id="Q9Y231"/>
<dbReference type="UniPathway" id="UPA00378"/>
<dbReference type="BioGRID-ORCS" id="10690">
    <property type="hits" value="10 hits in 1144 CRISPR screens"/>
</dbReference>
<dbReference type="ChiTaRS" id="FUT9">
    <property type="organism name" value="human"/>
</dbReference>
<dbReference type="GeneWiki" id="FUT9"/>
<dbReference type="GenomeRNAi" id="10690"/>
<dbReference type="Pharos" id="Q9Y231">
    <property type="development level" value="Tbio"/>
</dbReference>
<dbReference type="PRO" id="PR:Q9Y231"/>
<dbReference type="Proteomes" id="UP000005640">
    <property type="component" value="Chromosome 6"/>
</dbReference>
<dbReference type="RNAct" id="Q9Y231">
    <property type="molecule type" value="protein"/>
</dbReference>
<dbReference type="Bgee" id="ENSG00000172461">
    <property type="expression patterns" value="Expressed in pylorus and 85 other cell types or tissues"/>
</dbReference>
<dbReference type="GO" id="GO:0005794">
    <property type="term" value="C:Golgi apparatus"/>
    <property type="evidence" value="ECO:0000304"/>
    <property type="project" value="UniProtKB"/>
</dbReference>
<dbReference type="GO" id="GO:0000139">
    <property type="term" value="C:Golgi membrane"/>
    <property type="evidence" value="ECO:0000304"/>
    <property type="project" value="Reactome"/>
</dbReference>
<dbReference type="GO" id="GO:0005802">
    <property type="term" value="C:trans-Golgi network"/>
    <property type="evidence" value="ECO:0000314"/>
    <property type="project" value="UniProtKB"/>
</dbReference>
<dbReference type="GO" id="GO:0032588">
    <property type="term" value="C:trans-Golgi network membrane"/>
    <property type="evidence" value="ECO:0000314"/>
    <property type="project" value="UniProtKB"/>
</dbReference>
<dbReference type="GO" id="GO:0017083">
    <property type="term" value="F:4-galactosyl-N-acetylglucosaminide 3-alpha-L-fucosyltransferase activity"/>
    <property type="evidence" value="ECO:0000314"/>
    <property type="project" value="UniProtKB"/>
</dbReference>
<dbReference type="GO" id="GO:0046920">
    <property type="term" value="F:alpha-(1-&gt;3)-fucosyltransferase activity"/>
    <property type="evidence" value="ECO:0000314"/>
    <property type="project" value="UniProtKB"/>
</dbReference>
<dbReference type="GO" id="GO:0008417">
    <property type="term" value="F:fucosyltransferase activity"/>
    <property type="evidence" value="ECO:0000304"/>
    <property type="project" value="ProtInc"/>
</dbReference>
<dbReference type="GO" id="GO:0042803">
    <property type="term" value="F:protein homodimerization activity"/>
    <property type="evidence" value="ECO:0000314"/>
    <property type="project" value="UniProtKB"/>
</dbReference>
<dbReference type="GO" id="GO:0005975">
    <property type="term" value="P:carbohydrate metabolic process"/>
    <property type="evidence" value="ECO:0000304"/>
    <property type="project" value="ProtInc"/>
</dbReference>
<dbReference type="GO" id="GO:0036065">
    <property type="term" value="P:fucosylation"/>
    <property type="evidence" value="ECO:0000314"/>
    <property type="project" value="UniProtKB"/>
</dbReference>
<dbReference type="GO" id="GO:0006688">
    <property type="term" value="P:glycosphingolipid biosynthetic process"/>
    <property type="evidence" value="ECO:0000314"/>
    <property type="project" value="UniProtKB"/>
</dbReference>
<dbReference type="GO" id="GO:0042355">
    <property type="term" value="P:L-fucose catabolic process"/>
    <property type="evidence" value="ECO:0000303"/>
    <property type="project" value="UniProtKB"/>
</dbReference>
<dbReference type="GO" id="GO:0106402">
    <property type="term" value="P:Lewis x epitope biosynthetic process"/>
    <property type="evidence" value="ECO:0000314"/>
    <property type="project" value="UniProtKB"/>
</dbReference>
<dbReference type="GO" id="GO:0036071">
    <property type="term" value="P:N-glycan fucosylation"/>
    <property type="evidence" value="ECO:0007669"/>
    <property type="project" value="Ensembl"/>
</dbReference>
<dbReference type="GO" id="GO:0030182">
    <property type="term" value="P:neuron differentiation"/>
    <property type="evidence" value="ECO:0000314"/>
    <property type="project" value="UniProtKB"/>
</dbReference>
<dbReference type="GO" id="GO:0036445">
    <property type="term" value="P:neuronal stem cell division"/>
    <property type="evidence" value="ECO:0007669"/>
    <property type="project" value="Ensembl"/>
</dbReference>
<dbReference type="GO" id="GO:0009312">
    <property type="term" value="P:oligosaccharide biosynthetic process"/>
    <property type="evidence" value="ECO:0000304"/>
    <property type="project" value="Reactome"/>
</dbReference>
<dbReference type="GO" id="GO:0000271">
    <property type="term" value="P:polysaccharide biosynthetic process"/>
    <property type="evidence" value="ECO:0000250"/>
    <property type="project" value="UniProtKB"/>
</dbReference>
<dbReference type="GO" id="GO:0010976">
    <property type="term" value="P:positive regulation of neuron projection development"/>
    <property type="evidence" value="ECO:0000315"/>
    <property type="project" value="UniProtKB"/>
</dbReference>
<dbReference type="GO" id="GO:0006486">
    <property type="term" value="P:protein glycosylation"/>
    <property type="evidence" value="ECO:0000304"/>
    <property type="project" value="UniProtKB"/>
</dbReference>
<dbReference type="GO" id="GO:0006487">
    <property type="term" value="P:protein N-linked glycosylation"/>
    <property type="evidence" value="ECO:0000314"/>
    <property type="project" value="UniProtKB"/>
</dbReference>
<dbReference type="GO" id="GO:0006493">
    <property type="term" value="P:protein O-linked glycosylation"/>
    <property type="evidence" value="ECO:0000314"/>
    <property type="project" value="UniProtKB"/>
</dbReference>
<dbReference type="GO" id="GO:1903037">
    <property type="term" value="P:regulation of leukocyte cell-cell adhesion"/>
    <property type="evidence" value="ECO:0000315"/>
    <property type="project" value="UniProtKB"/>
</dbReference>
<dbReference type="GO" id="GO:1903236">
    <property type="term" value="P:regulation of leukocyte tethering or rolling"/>
    <property type="evidence" value="ECO:0000315"/>
    <property type="project" value="UniProtKB"/>
</dbReference>
<dbReference type="FunFam" id="3.40.50.11660:FF:000001">
    <property type="entry name" value="alpha-(1,3)-fucosyltransferase 9"/>
    <property type="match status" value="1"/>
</dbReference>
<dbReference type="Gene3D" id="3.40.50.11660">
    <property type="entry name" value="Glycosyl transferase family 10, C-terminal domain"/>
    <property type="match status" value="1"/>
</dbReference>
<dbReference type="InterPro" id="IPR055270">
    <property type="entry name" value="Glyco_tran_10_C"/>
</dbReference>
<dbReference type="InterPro" id="IPR031481">
    <property type="entry name" value="Glyco_tran_10_N"/>
</dbReference>
<dbReference type="InterPro" id="IPR001503">
    <property type="entry name" value="Glyco_trans_10"/>
</dbReference>
<dbReference type="InterPro" id="IPR038577">
    <property type="entry name" value="GT10-like_C_sf"/>
</dbReference>
<dbReference type="PANTHER" id="PTHR11929:SF10">
    <property type="entry name" value="4-GALACTOSYL-N-ACETYLGLUCOSAMINIDE 3-ALPHA-L-FUCOSYLTRANSFERASE 9"/>
    <property type="match status" value="1"/>
</dbReference>
<dbReference type="PANTHER" id="PTHR11929">
    <property type="entry name" value="ALPHA- 1,3 -FUCOSYLTRANSFERASE"/>
    <property type="match status" value="1"/>
</dbReference>
<dbReference type="Pfam" id="PF17039">
    <property type="entry name" value="Glyco_tran_10_N"/>
    <property type="match status" value="1"/>
</dbReference>
<dbReference type="Pfam" id="PF00852">
    <property type="entry name" value="Glyco_transf_10"/>
    <property type="match status" value="1"/>
</dbReference>
<dbReference type="SUPFAM" id="SSF53756">
    <property type="entry name" value="UDP-Glycosyltransferase/glycogen phosphorylase"/>
    <property type="match status" value="1"/>
</dbReference>
<name>FUT9_HUMAN</name>
<protein>
    <recommendedName>
        <fullName evidence="21">4-galactosyl-N-acetylglucosaminide 3-alpha-L-fucosyltransferase 9</fullName>
        <ecNumber evidence="5 7 8 12 14 15 17">2.4.1.152</ecNumber>
    </recommendedName>
    <alternativeName>
        <fullName evidence="20">Fucosyltransferase 9</fullName>
    </alternativeName>
    <alternativeName>
        <fullName evidence="18">Fucosyltransferase IX</fullName>
        <shortName evidence="18">Fuc-TIX</shortName>
        <shortName>FucT-IX</shortName>
    </alternativeName>
    <alternativeName>
        <fullName>Galactoside 3-L-fucosyltransferase</fullName>
    </alternativeName>
</protein>
<reference key="1">
    <citation type="journal article" date="1999" name="FEBS Lett.">
        <title>Alpha-1,3-fucosyltransferase IX (Fuc-TIX) is very highly conserved between human and mouse; molecular cloning, characterization and tissue distribution of human Fuc-TIX.</title>
        <authorList>
            <person name="Kaneko M."/>
            <person name="Kudo T."/>
            <person name="Iwasaki H."/>
            <person name="Ikehara Y."/>
            <person name="Nishihara S."/>
            <person name="Nakagawa S."/>
            <person name="Sasaki K."/>
            <person name="Shiina T."/>
            <person name="Inoko H."/>
            <person name="Saitou N."/>
            <person name="Narimatsu H."/>
        </authorList>
    </citation>
    <scope>NUCLEOTIDE SEQUENCE [MRNA]</scope>
    <scope>FUNCTION</scope>
    <scope>TISSUE SPECIFICITY</scope>
    <scope>VARIANT ALA-237</scope>
    <source>
        <tissue>Brain</tissue>
    </source>
</reference>
<reference key="2">
    <citation type="journal article" date="2000" name="Glycobiology">
        <title>FUT4 and FUT9 genes are expressed early in human embryogenesis.</title>
        <authorList>
            <person name="Cailleau-Thomas A."/>
            <person name="Coullin P."/>
            <person name="Candelier J.J."/>
            <person name="Balanzino L."/>
            <person name="Oriol R."/>
            <person name="Mollicone R."/>
            <person name="Mennesson B."/>
        </authorList>
    </citation>
    <scope>NUCLEOTIDE SEQUENCE [MRNA]</scope>
    <scope>VARIANT ALA-237</scope>
</reference>
<reference key="3">
    <citation type="journal article" date="2003" name="Nature">
        <title>The DNA sequence and analysis of human chromosome 6.</title>
        <authorList>
            <person name="Mungall A.J."/>
            <person name="Palmer S.A."/>
            <person name="Sims S.K."/>
            <person name="Edwards C.A."/>
            <person name="Ashurst J.L."/>
            <person name="Wilming L."/>
            <person name="Jones M.C."/>
            <person name="Horton R."/>
            <person name="Hunt S.E."/>
            <person name="Scott C.E."/>
            <person name="Gilbert J.G.R."/>
            <person name="Clamp M.E."/>
            <person name="Bethel G."/>
            <person name="Milne S."/>
            <person name="Ainscough R."/>
            <person name="Almeida J.P."/>
            <person name="Ambrose K.D."/>
            <person name="Andrews T.D."/>
            <person name="Ashwell R.I.S."/>
            <person name="Babbage A.K."/>
            <person name="Bagguley C.L."/>
            <person name="Bailey J."/>
            <person name="Banerjee R."/>
            <person name="Barker D.J."/>
            <person name="Barlow K.F."/>
            <person name="Bates K."/>
            <person name="Beare D.M."/>
            <person name="Beasley H."/>
            <person name="Beasley O."/>
            <person name="Bird C.P."/>
            <person name="Blakey S.E."/>
            <person name="Bray-Allen S."/>
            <person name="Brook J."/>
            <person name="Brown A.J."/>
            <person name="Brown J.Y."/>
            <person name="Burford D.C."/>
            <person name="Burrill W."/>
            <person name="Burton J."/>
            <person name="Carder C."/>
            <person name="Carter N.P."/>
            <person name="Chapman J.C."/>
            <person name="Clark S.Y."/>
            <person name="Clark G."/>
            <person name="Clee C.M."/>
            <person name="Clegg S."/>
            <person name="Cobley V."/>
            <person name="Collier R.E."/>
            <person name="Collins J.E."/>
            <person name="Colman L.K."/>
            <person name="Corby N.R."/>
            <person name="Coville G.J."/>
            <person name="Culley K.M."/>
            <person name="Dhami P."/>
            <person name="Davies J."/>
            <person name="Dunn M."/>
            <person name="Earthrowl M.E."/>
            <person name="Ellington A.E."/>
            <person name="Evans K.A."/>
            <person name="Faulkner L."/>
            <person name="Francis M.D."/>
            <person name="Frankish A."/>
            <person name="Frankland J."/>
            <person name="French L."/>
            <person name="Garner P."/>
            <person name="Garnett J."/>
            <person name="Ghori M.J."/>
            <person name="Gilby L.M."/>
            <person name="Gillson C.J."/>
            <person name="Glithero R.J."/>
            <person name="Grafham D.V."/>
            <person name="Grant M."/>
            <person name="Gribble S."/>
            <person name="Griffiths C."/>
            <person name="Griffiths M.N.D."/>
            <person name="Hall R."/>
            <person name="Halls K.S."/>
            <person name="Hammond S."/>
            <person name="Harley J.L."/>
            <person name="Hart E.A."/>
            <person name="Heath P.D."/>
            <person name="Heathcott R."/>
            <person name="Holmes S.J."/>
            <person name="Howden P.J."/>
            <person name="Howe K.L."/>
            <person name="Howell G.R."/>
            <person name="Huckle E."/>
            <person name="Humphray S.J."/>
            <person name="Humphries M.D."/>
            <person name="Hunt A.R."/>
            <person name="Johnson C.M."/>
            <person name="Joy A.A."/>
            <person name="Kay M."/>
            <person name="Keenan S.J."/>
            <person name="Kimberley A.M."/>
            <person name="King A."/>
            <person name="Laird G.K."/>
            <person name="Langford C."/>
            <person name="Lawlor S."/>
            <person name="Leongamornlert D.A."/>
            <person name="Leversha M."/>
            <person name="Lloyd C.R."/>
            <person name="Lloyd D.M."/>
            <person name="Loveland J.E."/>
            <person name="Lovell J."/>
            <person name="Martin S."/>
            <person name="Mashreghi-Mohammadi M."/>
            <person name="Maslen G.L."/>
            <person name="Matthews L."/>
            <person name="McCann O.T."/>
            <person name="McLaren S.J."/>
            <person name="McLay K."/>
            <person name="McMurray A."/>
            <person name="Moore M.J.F."/>
            <person name="Mullikin J.C."/>
            <person name="Niblett D."/>
            <person name="Nickerson T."/>
            <person name="Novik K.L."/>
            <person name="Oliver K."/>
            <person name="Overton-Larty E.K."/>
            <person name="Parker A."/>
            <person name="Patel R."/>
            <person name="Pearce A.V."/>
            <person name="Peck A.I."/>
            <person name="Phillimore B.J.C.T."/>
            <person name="Phillips S."/>
            <person name="Plumb R.W."/>
            <person name="Porter K.M."/>
            <person name="Ramsey Y."/>
            <person name="Ranby S.A."/>
            <person name="Rice C.M."/>
            <person name="Ross M.T."/>
            <person name="Searle S.M."/>
            <person name="Sehra H.K."/>
            <person name="Sheridan E."/>
            <person name="Skuce C.D."/>
            <person name="Smith S."/>
            <person name="Smith M."/>
            <person name="Spraggon L."/>
            <person name="Squares S.L."/>
            <person name="Steward C.A."/>
            <person name="Sycamore N."/>
            <person name="Tamlyn-Hall G."/>
            <person name="Tester J."/>
            <person name="Theaker A.J."/>
            <person name="Thomas D.W."/>
            <person name="Thorpe A."/>
            <person name="Tracey A."/>
            <person name="Tromans A."/>
            <person name="Tubby B."/>
            <person name="Wall M."/>
            <person name="Wallis J.M."/>
            <person name="West A.P."/>
            <person name="White S.S."/>
            <person name="Whitehead S.L."/>
            <person name="Whittaker H."/>
            <person name="Wild A."/>
            <person name="Willey D.J."/>
            <person name="Wilmer T.E."/>
            <person name="Wood J.M."/>
            <person name="Wray P.W."/>
            <person name="Wyatt J.C."/>
            <person name="Young L."/>
            <person name="Younger R.M."/>
            <person name="Bentley D.R."/>
            <person name="Coulson A."/>
            <person name="Durbin R.M."/>
            <person name="Hubbard T."/>
            <person name="Sulston J.E."/>
            <person name="Dunham I."/>
            <person name="Rogers J."/>
            <person name="Beck S."/>
        </authorList>
    </citation>
    <scope>NUCLEOTIDE SEQUENCE [LARGE SCALE GENOMIC DNA]</scope>
</reference>
<reference key="4">
    <citation type="journal article" date="2004" name="Genome Res.">
        <title>The status, quality, and expansion of the NIH full-length cDNA project: the Mammalian Gene Collection (MGC).</title>
        <authorList>
            <consortium name="The MGC Project Team"/>
        </authorList>
    </citation>
    <scope>NUCLEOTIDE SEQUENCE [LARGE SCALE MRNA]</scope>
    <scope>VARIANT ALA-237</scope>
    <source>
        <tissue>Brain</tissue>
    </source>
</reference>
<reference key="5">
    <citation type="journal article" date="1999" name="FEBS Lett.">
        <title>Alpha1,3-fucosyltransferase 9 (FUT9; Fuc-TIX) preferentially fucosylates the distal GlcNAc residue of polylactosamine chain while the other four alpha1,3FUT members preferentially fucosylate the inner GlcNAc residue.</title>
        <authorList>
            <person name="Nishihara S."/>
            <person name="Iwasaki H."/>
            <person name="Kaneko M."/>
            <person name="Tawada A."/>
            <person name="Ito M."/>
            <person name="Narimatsu H."/>
        </authorList>
    </citation>
    <scope>FUNCTION</scope>
    <scope>CATALYTIC ACTIVITY</scope>
    <scope>DEVELOPMENTAL STAGE</scope>
</reference>
<reference key="6">
    <citation type="journal article" date="2001" name="J. Biol. Chem.">
        <title>CD15 expression in mature granulocytes is determined by alpha 1,3-fucosyltransferase IX, but in promyelocytes and monocytes by alpha 1,3-fucosyltransferase IV.</title>
        <authorList>
            <person name="Nakayama F."/>
            <person name="Nishihara S."/>
            <person name="Iwasaki H."/>
            <person name="Kudo T."/>
            <person name="Okubo R."/>
            <person name="Kaneko M."/>
            <person name="Nakamura M."/>
            <person name="Karube M."/>
            <person name="Sasaki K."/>
            <person name="Narimatsu H."/>
        </authorList>
    </citation>
    <scope>FUNCTION</scope>
    <scope>CATALYTIC ACTIVITY</scope>
    <scope>TISSUE SPECIFICITY</scope>
</reference>
<reference key="7">
    <citation type="journal article" date="2002" name="Glycobiology">
        <title>Fuc-TIX: a versatile alpha1,3-fucosyltransferase with a distinct acceptor- and site-specificity profile.</title>
        <authorList>
            <person name="Toivonen S."/>
            <person name="Nishihara S."/>
            <person name="Narimatsu H."/>
            <person name="Renkonen O."/>
            <person name="Renkonen R."/>
        </authorList>
    </citation>
    <scope>FUNCTION</scope>
    <scope>CATALYTIC ACTIVITY</scope>
</reference>
<reference key="8">
    <citation type="journal article" date="2006" name="Glycobiology">
        <title>CEACAM1, an adhesion molecule of human granulocytes, is fucosylated by fucosyltransferase IX and interacts with DC-SIGN of dendritic cells via Lewis x residues.</title>
        <authorList>
            <person name="Bogoevska V."/>
            <person name="Horst A."/>
            <person name="Klampe B."/>
            <person name="Lucka L."/>
            <person name="Wagener C."/>
            <person name="Nollau P."/>
        </authorList>
    </citation>
    <scope>FUNCTION</scope>
    <scope>PATHWAY</scope>
</reference>
<reference key="9">
    <citation type="journal article" date="2007" name="J. Neurosci. Res.">
        <title>Increased levels of fucosyltransferase IX and carbohydrate Lewis(x) adhesion determinant in human NT2N neurons.</title>
        <authorList>
            <person name="Brito C."/>
            <person name="Escrevente C."/>
            <person name="Reis C.A."/>
            <person name="Lee V.M."/>
            <person name="Trojanowski J.Q."/>
            <person name="Costa J."/>
        </authorList>
    </citation>
    <scope>FUNCTION</scope>
</reference>
<reference key="10">
    <citation type="journal article" date="2008" name="Biochimie">
        <title>Human fucosyltransferase IX: specificity towards N-linked glycoproteins and relevance of the cytoplasmic domain in intra-Golgi localization.</title>
        <authorList>
            <person name="Brito C."/>
            <person name="Kandzia S."/>
            <person name="Graca T."/>
            <person name="Conradt H.S."/>
            <person name="Costa J."/>
        </authorList>
    </citation>
    <scope>GLYCOSYLATED</scope>
    <scope>FUNCTION</scope>
    <scope>SUBCELLULAR LOCATION</scope>
    <scope>MUTAGENESIS OF 2-THR--LEU-9; 2-THR--SER-5; SER-3 AND SER-5</scope>
    <scope>CATALYTIC ACTIVITY</scope>
    <scope>ACTIVITY REGULATION</scope>
</reference>
<reference key="11">
    <citation type="journal article" date="2012" name="Biochim. Biophys. Acta">
        <title>Expression of glycogenes in differentiating human NT2N neurons. Downregulation of fucosyltransferase 9 leads to decreased Lewis(x) levels and impaired neurite outgrowth.</title>
        <authorList>
            <person name="Gouveia R."/>
            <person name="Schaffer L."/>
            <person name="Papp S."/>
            <person name="Grammel N."/>
            <person name="Kandzia S."/>
            <person name="Head S.R."/>
            <person name="Kleene R."/>
            <person name="Schachner M."/>
            <person name="Conradt H.S."/>
            <person name="Costa J."/>
        </authorList>
    </citation>
    <scope>FUNCTION</scope>
</reference>
<reference key="12">
    <citation type="journal article" date="2013" name="Glycobiology">
        <title>N-glycosylations of human alpha1,3-fucosyltransferase IX are required for full enzyme activity.</title>
        <authorList>
            <person name="Seelhorst K."/>
            <person name="Stacke C."/>
            <person name="Ziegelmueller P."/>
            <person name="Hahn U."/>
        </authorList>
    </citation>
    <scope>MUTAGENESIS OF ASN-62; ASN-101 AND ASN-153</scope>
    <scope>BIOPHYSICOCHEMICAL PROPERTIES</scope>
    <scope>CATALYTIC ACTIVITY</scope>
    <scope>FUNCTION</scope>
</reference>
<reference key="13">
    <citation type="journal article" date="2013" name="J. Biol. Chem.">
        <title>Silencing alpha1,3-fucosyltransferases in human leukocytes reveals a role for FUT9 enzyme during E-selectin-mediated cell adhesion.</title>
        <authorList>
            <person name="Buffone A. Jr."/>
            <person name="Mondal N."/>
            <person name="Gupta R."/>
            <person name="McHugh K.P."/>
            <person name="Lau J.T."/>
            <person name="Neelamegham S."/>
        </authorList>
    </citation>
    <scope>FUNCTION</scope>
    <scope>CATALYTIC ACTIVITY</scope>
</reference>
<reference key="14">
    <citation type="journal article" date="2018" name="J. Biol. Chem.">
        <title>Distinct human alpha(1,3)-fucosyltransferases drive Lewis-X/sialyl Lewis-X assembly in human cells.</title>
        <authorList>
            <person name="Mondal N."/>
            <person name="Dykstra B."/>
            <person name="Lee J."/>
            <person name="Ashline D.J."/>
            <person name="Reinhold V.N."/>
            <person name="Rossi D.J."/>
            <person name="Sackstein R."/>
        </authorList>
    </citation>
    <scope>FUNCTION</scope>
    <scope>CATALYTIC ACTIVITY</scope>
    <scope>PATHWAY</scope>
</reference>
<reference key="15">
    <citation type="journal article" date="2023" name="Nat. Chem. Biol.">
        <title>Structural basis for Lewis antigen synthesis by the alpha1,3-fucosyltransferase FUT9.</title>
        <authorList>
            <person name="Kadirvelraj R."/>
            <person name="Boruah B.M."/>
            <person name="Wang S."/>
            <person name="Chapla D."/>
            <person name="Huang C."/>
            <person name="Ramiah A."/>
            <person name="Hudson K.L."/>
            <person name="Prudden A.R."/>
            <person name="Boons G.J."/>
            <person name="Withers S.G."/>
            <person name="Wood Z.A."/>
            <person name="Moremen K.W."/>
        </authorList>
    </citation>
    <scope>X-RAY CRYSTALLOGRAPHY (1.09 ANGSTROMS) OF 39-359 IN COMPLEX WITH GDP-BETA-L-FUCOSE AND ACCEPTOR SUBSTRATES</scope>
    <scope>DISULFIDE BONDS</scope>
    <scope>GLYCOSYLATION AT ASN-153</scope>
    <scope>DOMAIN</scope>
    <scope>ACTIVE SITE</scope>
    <scope>SUBUNIT</scope>
    <scope>FUNCTION</scope>
    <scope>CATALYTIC ACTIVITY</scope>
    <scope>BIOPHYSICOCHEMICAL PROPERTIES</scope>
    <scope>MUTAGENESIS OF PHE-73; GLN-75; ARG-111; GLU-137; HIS-141; SER-194; ASN-195; ASN-197; HIS-200; ARG-202; ASP-228; TYR-241; ASN-246; TYR-252; THR-254; GLU-255; LYS-256; PRO-327; ARG-328 AND PHE-329</scope>
</reference>
<proteinExistence type="evidence at protein level"/>
<keyword id="KW-0002">3D-structure</keyword>
<keyword id="KW-0119">Carbohydrate metabolism</keyword>
<keyword id="KW-1015">Disulfide bond</keyword>
<keyword id="KW-0325">Glycoprotein</keyword>
<keyword id="KW-0328">Glycosyltransferase</keyword>
<keyword id="KW-0333">Golgi apparatus</keyword>
<keyword id="KW-0443">Lipid metabolism</keyword>
<keyword id="KW-0472">Membrane</keyword>
<keyword id="KW-1267">Proteomics identification</keyword>
<keyword id="KW-1185">Reference proteome</keyword>
<keyword id="KW-0735">Signal-anchor</keyword>
<keyword id="KW-0808">Transferase</keyword>
<keyword id="KW-0812">Transmembrane</keyword>
<keyword id="KW-1133">Transmembrane helix</keyword>
<accession>Q9Y231</accession>
<accession>Q5T0W4</accession>
<sequence>MTSTSKGILRPFLIVCIILGCFMACLLIYIKPTNSWIFSPMESASSVLKMKNFFSTKTDYFNETTILVWVWPFGQTFDLTSCQAMFNIQGCHLTTDRSLYNKSHAVLIHHRDISWDLTNLPQQARPPFQKWIWMNLESPTHTPQKSGIEHLFNLTLTYRRDSDIQVPYGFLTVSTNPFVFEVPSKEKLVCWVVSNWNPEHARVKYYNELSKSIEIHTYGQAFGEYVNDKNLIPTISTCKFYLSFENSIHKDYITEKLYNAFLAGSVPVVLGPSRENYENYIPADSFIHVEDYNSPSELAKYLKEVDKNNKLYLSYFNWRKDFTVNLPRFWESHACLACDHVKRHQEYKSVGNLEKWFWN</sequence>
<comment type="function">
    <text evidence="1 4 5 7 8 10 11 12 13 14 15 16 17">Catalyzes alpha(1-&gt;3) linkage of fucosyl moiety transferred from GDP-beta-L-fucose to N-acetyl glucosamine (GlcNAc) within type 2 lactosamine (LacNAc, beta-D-Gal-(1-&gt;4)-beta-D-GlcNAc-) glycan attached to glycolipids and N- or O-linked glycoproteins. Fucosylates distal type 2 LacNAc and its fucosylated (H-type 2 LacNAc) and sialylated (sialyl-type 2 LacNAc) derivatives to form Lewis x (Lex) (CD15) and Lewis y (Ley) antigenic epitopes involved in cell adhesion and differentiation (PubMed:10386598, PubMed:10622713, PubMed:11278338, PubMed:12107078, PubMed:16282604, PubMed:17335083, PubMed:18395013, PubMed:23192350, PubMed:23263199, PubMed:29593094, PubMed:37202521). Generates Lex epitopes in the brain, presumably playing a role in the maintenance of neuronal stemness and neurite outgrowth in progenitor neural cells (By similarity) (PubMed:17335083, PubMed:23000574). Fucosylates the internal type 2 LacNAc unit of the polylactosamine chain to form VIM-2 antigen that serves as recognition epitope for SELE (PubMed:23192350). Can also modify milk oligosaccharides, in particular type 2 tetrasaccharide LNnT (PubMed:37202521).</text>
</comment>
<comment type="catalytic activity">
    <reaction evidence="5 7 8 12 14 15 16 17">
        <text>a beta-D-galactosyl-(1-&gt;4)-N-acetyl-beta-D-glucosaminyl derivative + GDP-beta-L-fucose = a beta-D-galactosyl-(1-&gt;4)-[alpha-L-fucosyl-(1-&gt;3)]-N-acetyl-beta-D-glucosaminyl derivative + GDP + H(+)</text>
        <dbReference type="Rhea" id="RHEA:14257"/>
        <dbReference type="ChEBI" id="CHEBI:15378"/>
        <dbReference type="ChEBI" id="CHEBI:57273"/>
        <dbReference type="ChEBI" id="CHEBI:58189"/>
        <dbReference type="ChEBI" id="CHEBI:133507"/>
        <dbReference type="ChEBI" id="CHEBI:137941"/>
        <dbReference type="EC" id="2.4.1.152"/>
    </reaction>
    <physiologicalReaction direction="left-to-right" evidence="5 7 8 12 14 16 17">
        <dbReference type="Rhea" id="RHEA:14258"/>
    </physiologicalReaction>
</comment>
<comment type="catalytic activity">
    <reaction evidence="7">
        <text>an alpha-Neu5Ac-(2-&gt;3)-beta-D-Gal-(1-&gt;4)-beta-D-GlcNAc-(1-&gt;3)-beta-D-Gal-(1-&gt;4)-beta-D-GlcNAc derivative + GDP-beta-L-fucose = an alpha-Neu5Ac-(2-&gt;3)-beta-D-Gal-(1-&gt;4)-beta-D-GlcNAc-(1-&gt;3)-beta-D-Gal-(1-&gt;4)-[alpha-L-Fuc-(1-&gt;3)]-beta-D-GlcNAc derivative + GDP + H(+)</text>
        <dbReference type="Rhea" id="RHEA:68044"/>
        <dbReference type="ChEBI" id="CHEBI:15378"/>
        <dbReference type="ChEBI" id="CHEBI:57273"/>
        <dbReference type="ChEBI" id="CHEBI:58189"/>
        <dbReference type="ChEBI" id="CHEBI:145343"/>
        <dbReference type="ChEBI" id="CHEBI:176900"/>
    </reaction>
    <physiologicalReaction direction="left-to-right" evidence="22">
        <dbReference type="Rhea" id="RHEA:68045"/>
    </physiologicalReaction>
</comment>
<comment type="catalytic activity">
    <reaction evidence="1">
        <text>alpha-N-glycoloylneuraminosyl-(2-&gt;3)-beta-D-galactosyl-(1-&gt;4)-N-acetyl-beta-D-glucosaminyl-(1-&gt;3)-beta-D-galactosyl-(1-&gt;4)-N-acetyl-beta-D-glucosaminyl-(1-&gt;3)-beta-D-galactosyl-(1-&gt;4)-beta-D-glucosyl-(1&lt;-&gt;1')-ceramide + GDP-beta-L-fucose = alpha-N-glycoloylneuraminosyl-(2-&gt;3)-beta-D-galactosyl-(1-&gt;4)-N-acetyl-beta-D-glucosaminyl-(1-&gt;3)-beta-D-galactosyl-(1-&gt;4)-[alpha-L-fucosyl-(1-&gt;3)]-N-acetyl-beta-D-glucosaminyl-(1-&gt;3)-beta-D-galactosyl-(1-&gt;4)-beta-D-glucosyl-(1&lt;-&gt;1')-ceramide + GDP + H(+)</text>
        <dbReference type="Rhea" id="RHEA:48388"/>
        <dbReference type="ChEBI" id="CHEBI:15378"/>
        <dbReference type="ChEBI" id="CHEBI:57273"/>
        <dbReference type="ChEBI" id="CHEBI:58189"/>
        <dbReference type="ChEBI" id="CHEBI:90383"/>
        <dbReference type="ChEBI" id="CHEBI:90384"/>
    </reaction>
    <physiologicalReaction direction="left-to-right" evidence="1">
        <dbReference type="Rhea" id="RHEA:48389"/>
    </physiologicalReaction>
</comment>
<comment type="catalytic activity">
    <reaction evidence="1">
        <text>alpha-D-galactosyl-(1-&gt;3)-beta-D-galactosyl-(1-&gt;4)-N-acetyl-beta-D-glucosaminyl-(1-&gt;3)-beta-D-galactosyl-(1-&gt;4)-beta-D-glucosyl-(1&lt;-&gt;1')-ceramide + GDP-beta-L-fucose = a neolactoside IV(3)-alpha-Gal,III(3)-alpha-Fuc-nLc4Cer + GDP + H(+)</text>
        <dbReference type="Rhea" id="RHEA:48380"/>
        <dbReference type="ChEBI" id="CHEBI:15378"/>
        <dbReference type="ChEBI" id="CHEBI:57273"/>
        <dbReference type="ChEBI" id="CHEBI:58189"/>
        <dbReference type="ChEBI" id="CHEBI:90380"/>
        <dbReference type="ChEBI" id="CHEBI:90381"/>
    </reaction>
    <physiologicalReaction direction="left-to-right" evidence="1">
        <dbReference type="Rhea" id="RHEA:48381"/>
    </physiologicalReaction>
</comment>
<comment type="catalytic activity">
    <reaction evidence="1">
        <text>a neolactoside nLc4Cer + GDP-beta-L-fucose = a neolactoside III(3)-alpha-Fuc-nLc4Cer + GDP + H(+)</text>
        <dbReference type="Rhea" id="RHEA:48376"/>
        <dbReference type="ChEBI" id="CHEBI:15378"/>
        <dbReference type="ChEBI" id="CHEBI:57273"/>
        <dbReference type="ChEBI" id="CHEBI:58189"/>
        <dbReference type="ChEBI" id="CHEBI:90376"/>
        <dbReference type="ChEBI" id="CHEBI:90379"/>
    </reaction>
    <physiologicalReaction direction="left-to-right" evidence="1">
        <dbReference type="Rhea" id="RHEA:48377"/>
    </physiologicalReaction>
</comment>
<comment type="catalytic activity">
    <reaction evidence="17">
        <text>an N-acetyl-alpha-neuraminyl-(2-&gt;3)-beta-D-galactosyl-(1-&gt;4)-N-acetyl-beta-D-glucosaminyl derivative + GDP-beta-L-fucose = an alpha-Neu5Ac-(2-&gt;3)-beta-D-Gal-(1-&gt;4)-[alpha-L-Fuc-(1-&gt;3)]-beta-D-GlcNAc derivative + GDP + H(+)</text>
        <dbReference type="Rhea" id="RHEA:56076"/>
        <dbReference type="ChEBI" id="CHEBI:15378"/>
        <dbReference type="ChEBI" id="CHEBI:57273"/>
        <dbReference type="ChEBI" id="CHEBI:58189"/>
        <dbReference type="ChEBI" id="CHEBI:136545"/>
        <dbReference type="ChEBI" id="CHEBI:139509"/>
    </reaction>
    <physiologicalReaction direction="left-to-right" evidence="17">
        <dbReference type="Rhea" id="RHEA:56077"/>
    </physiologicalReaction>
</comment>
<comment type="catalytic activity">
    <reaction evidence="17">
        <text>beta-D-Gal-(1-&gt;4)-beta-D-GlcNAc-(1-&gt;3)-beta-D-Gal-(1-&gt;4)-D-Glc + GDP-beta-L-fucose = beta-D-Gal-(1-&gt;4)-[alpha-L-Fuc-(1-&gt;3)]-beta-D-GlcNAc-(1-&gt;3)-beta-D-Gal-(1-&gt;4)-D-Glc + GDP + H(+)</text>
        <dbReference type="Rhea" id="RHEA:77187"/>
        <dbReference type="ChEBI" id="CHEBI:15378"/>
        <dbReference type="ChEBI" id="CHEBI:57273"/>
        <dbReference type="ChEBI" id="CHEBI:58189"/>
        <dbReference type="ChEBI" id="CHEBI:60239"/>
        <dbReference type="ChEBI" id="CHEBI:61352"/>
    </reaction>
    <physiologicalReaction direction="left-to-right" evidence="17">
        <dbReference type="Rhea" id="RHEA:77188"/>
    </physiologicalReaction>
</comment>
<comment type="catalytic activity">
    <reaction evidence="17">
        <text>an alpha-L-Fuc-(1-&gt;2)-beta-D-Gal-(1-&gt;4)-beta-D-GlcNAc derivative + GDP-beta-L-fucose = an alpha-L-Fuc-(1-&gt;2)-beta-D-Gal-(1-&gt;4)-[alpha-L-Fuc-(1-&gt;3)]-beta-D-GlcNAc derivative + GDP + H(+)</text>
        <dbReference type="Rhea" id="RHEA:77191"/>
        <dbReference type="ChEBI" id="CHEBI:15378"/>
        <dbReference type="ChEBI" id="CHEBI:57273"/>
        <dbReference type="ChEBI" id="CHEBI:58189"/>
        <dbReference type="ChEBI" id="CHEBI:133510"/>
        <dbReference type="ChEBI" id="CHEBI:195560"/>
    </reaction>
    <physiologicalReaction direction="left-to-right" evidence="17">
        <dbReference type="Rhea" id="RHEA:77192"/>
    </physiologicalReaction>
</comment>
<comment type="activity regulation">
    <text evidence="12">Activated by Mn2+.</text>
</comment>
<comment type="biophysicochemical properties">
    <kinetics>
        <KM evidence="15">0.61 mM for N-acetyllactosamine</KM>
        <KM evidence="15">2.6 uM for GDP-beta-L-fucose</KM>
        <KM evidence="17">204 uM for LNnT</KM>
        <KM evidence="17">35 uM for H-type 2 LacNAc</KM>
        <KM evidence="17">54.4 uM for type 2 LacNAc</KM>
        <KM evidence="17">3970 uM for sialyl-type 2 LacNAc</KM>
        <KM evidence="17">13 uM for GDP-beta-L-fucose</KM>
        <text>kcat is 0.59 sec(-1) for LNnT. kcat is 0.43 sec(-1) for H-type 2 LacNAc. kcat is 0.41 sec(-1) for type 2 LacNAc. kcat is 0.58 sec(-1) for sialyl-type 2 LacNAc. kcat is 0.49 sec(-1) for GDP-fucose.</text>
    </kinetics>
</comment>
<comment type="pathway">
    <text evidence="10 16">Protein modification; protein glycosylation.</text>
</comment>
<comment type="pathway">
    <text evidence="1">Glycolipid biosynthesis.</text>
</comment>
<comment type="subunit">
    <text evidence="17">Homodimer.</text>
</comment>
<comment type="interaction">
    <interactant intactId="EBI-3922408">
        <id>Q9Y231</id>
    </interactant>
    <interactant intactId="EBI-17274839">
        <id>P58418</id>
        <label>CLRN1</label>
    </interactant>
    <organismsDiffer>false</organismsDiffer>
    <experiments>3</experiments>
</comment>
<comment type="interaction">
    <interactant intactId="EBI-3922408">
        <id>Q9Y231</id>
    </interactant>
    <interactant intactId="EBI-2477093">
        <id>Q9NWM8</id>
        <label>FKBP14</label>
    </interactant>
    <organismsDiffer>false</organismsDiffer>
    <experiments>2</experiments>
</comment>
<comment type="interaction">
    <interactant intactId="EBI-3922408">
        <id>Q9Y231</id>
    </interactant>
    <interactant intactId="EBI-712073">
        <id>Q8NBJ4</id>
        <label>GOLM1</label>
    </interactant>
    <organismsDiffer>false</organismsDiffer>
    <experiments>3</experiments>
</comment>
<comment type="interaction">
    <interactant intactId="EBI-3922408">
        <id>Q9Y231</id>
    </interactant>
    <interactant intactId="EBI-7116203">
        <id>O75031</id>
        <label>HSF2BP</label>
    </interactant>
    <organismsDiffer>false</organismsDiffer>
    <experiments>3</experiments>
</comment>
<comment type="subcellular location">
    <subcellularLocation>
        <location evidence="12">Golgi apparatus</location>
        <location evidence="12">trans-Golgi network membrane</location>
        <topology evidence="2">Single-pass type II membrane protein</topology>
    </subcellularLocation>
    <subcellularLocation>
        <location evidence="1">Golgi apparatus membrane</location>
    </subcellularLocation>
</comment>
<comment type="tissue specificity">
    <text evidence="4 7">Strongly expressed in forebrain and stomach, lower expression in spleen and peripheral blood leukocytes, and no expression in small intestine, colon, liver, lung, kidney, adrenal cortex or uterus (PubMed:10386598). Highly expressed in granulocytes. Not expressed in monocytes (PubMed:11278338).</text>
</comment>
<comment type="domain">
    <text evidence="17">The donor-binding domain adopts a Rossman-like fold involved in GDP-beta-L-fucose sugar donor interactions.</text>
</comment>
<comment type="domain">
    <text evidence="17">The acceptor-binding domain adopts a Rossman-like fold consisting of six-stranded parallel beta sheets characteristic of the Toll/interleukin-1 receptor (TIR) fold family. Interacts with the LacNAc unit of type 2 LacNAc and H-type 2 LacNAc structures. It contains the catalytic base Glu-137 which deprotonates the hydroxyl group of GlcNAc while forming bridging interactions with the donor sugar to position the catalytic machinery in the active site.</text>
</comment>
<comment type="PTM">
    <text evidence="12 17">N-glycosylated with complex-type N-glycans. The glycan alpha-D-Man-(1-&gt;3)-beta-D-Man-(1-&gt;4)-GlcNAc-(1-&gt;4)-GlcNAc is attached at Asn-153.</text>
</comment>
<comment type="similarity">
    <text evidence="21">Belongs to the glycosyltransferase 10 family.</text>
</comment>
<comment type="online information" name="Functional Glycomics Gateway - GTase">
    <link uri="http://www.functionalglycomics.org/glycomics/molecule/jsp/glycoEnzyme/viewGlycoEnzyme.jsp?gbpId=gt_hum_606"/>
    <text>Fucosyltransferase 9</text>
</comment>